<comment type="function">
    <text evidence="1">An accessory protein needed during the final step in the assembly of 30S ribosomal subunit, possibly for assembly of the head region. Essential for efficient processing of 16S rRNA. May be needed both before and after RbfA during the maturation of 16S rRNA. It has affinity for free ribosomal 30S subunits but not for 70S ribosomes.</text>
</comment>
<comment type="subunit">
    <text evidence="1">Binds ribosomal protein uS19.</text>
</comment>
<comment type="subcellular location">
    <subcellularLocation>
        <location evidence="1">Cytoplasm</location>
    </subcellularLocation>
</comment>
<comment type="domain">
    <text evidence="1">The PRC barrel domain binds ribosomal protein uS19.</text>
</comment>
<comment type="similarity">
    <text evidence="1">Belongs to the RimM family.</text>
</comment>
<accession>Q8E4H6</accession>
<dbReference type="EMBL" id="AL766850">
    <property type="protein sequence ID" value="CAD47084.1"/>
    <property type="molecule type" value="Genomic_DNA"/>
</dbReference>
<dbReference type="RefSeq" id="WP_000455620.1">
    <property type="nucleotide sequence ID" value="NC_004368.1"/>
</dbReference>
<dbReference type="SMR" id="Q8E4H6"/>
<dbReference type="GeneID" id="66886219"/>
<dbReference type="KEGG" id="san:gbs1425"/>
<dbReference type="eggNOG" id="COG0806">
    <property type="taxonomic scope" value="Bacteria"/>
</dbReference>
<dbReference type="HOGENOM" id="CLU_077636_3_1_9"/>
<dbReference type="Proteomes" id="UP000000823">
    <property type="component" value="Chromosome"/>
</dbReference>
<dbReference type="GO" id="GO:0005737">
    <property type="term" value="C:cytoplasm"/>
    <property type="evidence" value="ECO:0007669"/>
    <property type="project" value="UniProtKB-SubCell"/>
</dbReference>
<dbReference type="GO" id="GO:0005840">
    <property type="term" value="C:ribosome"/>
    <property type="evidence" value="ECO:0007669"/>
    <property type="project" value="InterPro"/>
</dbReference>
<dbReference type="GO" id="GO:0043022">
    <property type="term" value="F:ribosome binding"/>
    <property type="evidence" value="ECO:0007669"/>
    <property type="project" value="InterPro"/>
</dbReference>
<dbReference type="GO" id="GO:0042274">
    <property type="term" value="P:ribosomal small subunit biogenesis"/>
    <property type="evidence" value="ECO:0007669"/>
    <property type="project" value="UniProtKB-UniRule"/>
</dbReference>
<dbReference type="GO" id="GO:0006364">
    <property type="term" value="P:rRNA processing"/>
    <property type="evidence" value="ECO:0007669"/>
    <property type="project" value="UniProtKB-UniRule"/>
</dbReference>
<dbReference type="Gene3D" id="2.30.30.240">
    <property type="entry name" value="PRC-barrel domain"/>
    <property type="match status" value="1"/>
</dbReference>
<dbReference type="Gene3D" id="2.40.30.60">
    <property type="entry name" value="RimM"/>
    <property type="match status" value="1"/>
</dbReference>
<dbReference type="HAMAP" id="MF_00014">
    <property type="entry name" value="Ribosome_mat_RimM"/>
    <property type="match status" value="1"/>
</dbReference>
<dbReference type="InterPro" id="IPR027275">
    <property type="entry name" value="PRC-brl_dom"/>
</dbReference>
<dbReference type="InterPro" id="IPR011033">
    <property type="entry name" value="PRC_barrel-like_sf"/>
</dbReference>
<dbReference type="InterPro" id="IPR011961">
    <property type="entry name" value="RimM"/>
</dbReference>
<dbReference type="InterPro" id="IPR002676">
    <property type="entry name" value="RimM_N"/>
</dbReference>
<dbReference type="InterPro" id="IPR036976">
    <property type="entry name" value="RimM_N_sf"/>
</dbReference>
<dbReference type="InterPro" id="IPR009000">
    <property type="entry name" value="Transl_B-barrel_sf"/>
</dbReference>
<dbReference type="NCBIfam" id="TIGR02273">
    <property type="entry name" value="16S_RimM"/>
    <property type="match status" value="1"/>
</dbReference>
<dbReference type="PANTHER" id="PTHR33692">
    <property type="entry name" value="RIBOSOME MATURATION FACTOR RIMM"/>
    <property type="match status" value="1"/>
</dbReference>
<dbReference type="PANTHER" id="PTHR33692:SF1">
    <property type="entry name" value="RIBOSOME MATURATION FACTOR RIMM"/>
    <property type="match status" value="1"/>
</dbReference>
<dbReference type="Pfam" id="PF05239">
    <property type="entry name" value="PRC"/>
    <property type="match status" value="1"/>
</dbReference>
<dbReference type="Pfam" id="PF01782">
    <property type="entry name" value="RimM"/>
    <property type="match status" value="1"/>
</dbReference>
<dbReference type="SUPFAM" id="SSF50346">
    <property type="entry name" value="PRC-barrel domain"/>
    <property type="match status" value="1"/>
</dbReference>
<dbReference type="SUPFAM" id="SSF50447">
    <property type="entry name" value="Translation proteins"/>
    <property type="match status" value="1"/>
</dbReference>
<keyword id="KW-0143">Chaperone</keyword>
<keyword id="KW-0963">Cytoplasm</keyword>
<keyword id="KW-0690">Ribosome biogenesis</keyword>
<keyword id="KW-0698">rRNA processing</keyword>
<reference key="1">
    <citation type="journal article" date="2002" name="Mol. Microbiol.">
        <title>Genome sequence of Streptococcus agalactiae, a pathogen causing invasive neonatal disease.</title>
        <authorList>
            <person name="Glaser P."/>
            <person name="Rusniok C."/>
            <person name="Buchrieser C."/>
            <person name="Chevalier F."/>
            <person name="Frangeul L."/>
            <person name="Msadek T."/>
            <person name="Zouine M."/>
            <person name="Couve E."/>
            <person name="Lalioui L."/>
            <person name="Poyart C."/>
            <person name="Trieu-Cuot P."/>
            <person name="Kunst F."/>
        </authorList>
    </citation>
    <scope>NUCLEOTIDE SEQUENCE [LARGE SCALE GENOMIC DNA]</scope>
    <source>
        <strain>NEM316</strain>
    </source>
</reference>
<proteinExistence type="inferred from homology"/>
<sequence>MEYFNVGKIVNTQGLQGEMRVLSVTDFVEERFKKGQVLALFDEKNQFVMDIEIASHRKQKNFDIIKFKGMYHINDIEKYKGFTLKVAEDQLSDLKDGEFYYHEIIGLDVYEGEELIGKIKEILQPGANDVWVVERHGKRDLLLPYIPPVVLEVDLSNQRVQVELMEGLDDED</sequence>
<organism>
    <name type="scientific">Streptococcus agalactiae serotype III (strain NEM316)</name>
    <dbReference type="NCBI Taxonomy" id="211110"/>
    <lineage>
        <taxon>Bacteria</taxon>
        <taxon>Bacillati</taxon>
        <taxon>Bacillota</taxon>
        <taxon>Bacilli</taxon>
        <taxon>Lactobacillales</taxon>
        <taxon>Streptococcaceae</taxon>
        <taxon>Streptococcus</taxon>
    </lineage>
</organism>
<evidence type="ECO:0000255" key="1">
    <source>
        <dbReference type="HAMAP-Rule" id="MF_00014"/>
    </source>
</evidence>
<name>RIMM_STRA3</name>
<gene>
    <name evidence="1" type="primary">rimM</name>
    <name type="ordered locus">gbs1425</name>
</gene>
<feature type="chain" id="PRO_0000163359" description="Ribosome maturation factor RimM">
    <location>
        <begin position="1"/>
        <end position="172"/>
    </location>
</feature>
<feature type="domain" description="PRC barrel" evidence="1">
    <location>
        <begin position="96"/>
        <end position="168"/>
    </location>
</feature>
<protein>
    <recommendedName>
        <fullName evidence="1">Ribosome maturation factor RimM</fullName>
    </recommendedName>
</protein>